<name>YL577_MIMIV</name>
<feature type="chain" id="PRO_0000251122" description="Uncharacterized protein L577">
    <location>
        <begin position="1"/>
        <end position="299"/>
    </location>
</feature>
<reference key="1">
    <citation type="journal article" date="2004" name="Science">
        <title>The 1.2-megabase genome sequence of Mimivirus.</title>
        <authorList>
            <person name="Raoult D."/>
            <person name="Audic S."/>
            <person name="Robert C."/>
            <person name="Abergel C."/>
            <person name="Renesto P."/>
            <person name="Ogata H."/>
            <person name="La Scola B."/>
            <person name="Susan M."/>
            <person name="Claverie J.-M."/>
        </authorList>
    </citation>
    <scope>NUCLEOTIDE SEQUENCE [LARGE SCALE GENOMIC DNA]</scope>
    <source>
        <strain>Rowbotham-Bradford</strain>
    </source>
</reference>
<dbReference type="EMBL" id="AY653733">
    <property type="protein sequence ID" value="AAV50840.1"/>
    <property type="molecule type" value="Genomic_DNA"/>
</dbReference>
<dbReference type="KEGG" id="vg:9925212"/>
<dbReference type="Proteomes" id="UP000001134">
    <property type="component" value="Genome"/>
</dbReference>
<sequence>MDPSILSKIHYSGITCNNYGFYNTPFYLKRDKEDNVECYQTNIFMYYDDHDDHNMTDCDYTYCFVKDLCVSICRGSDDNDENHSFLKAKIIISDSLKLTGIKNDTDGSIEFPQIDNENPLILREDNSTTIKINLFGQLSDLINYQIQVKFSAGVIDKSTADYFNNNEFVCFDDFTFSRGTYLENSDSTESEFYREAILIKGRKFDFYPYQGHHVFDIEYDFLDHNFNPIQPSNNLLEKLYFVKDHNKSKISSICSYTETNPLLVDKYYDDNYIDGLFEIMRKKEMVLYVKFMVKKIDSD</sequence>
<organism>
    <name type="scientific">Acanthamoeba polyphaga mimivirus</name>
    <name type="common">APMV</name>
    <dbReference type="NCBI Taxonomy" id="212035"/>
    <lineage>
        <taxon>Viruses</taxon>
        <taxon>Varidnaviria</taxon>
        <taxon>Bamfordvirae</taxon>
        <taxon>Nucleocytoviricota</taxon>
        <taxon>Megaviricetes</taxon>
        <taxon>Imitervirales</taxon>
        <taxon>Mimiviridae</taxon>
        <taxon>Megamimivirinae</taxon>
        <taxon>Mimivirus</taxon>
        <taxon>Mimivirus bradfordmassiliense</taxon>
    </lineage>
</organism>
<accession>Q5UR95</accession>
<protein>
    <recommendedName>
        <fullName>Uncharacterized protein L577</fullName>
    </recommendedName>
</protein>
<proteinExistence type="predicted"/>
<keyword id="KW-1185">Reference proteome</keyword>
<gene>
    <name type="ordered locus">MIMI_L577</name>
</gene>
<organismHost>
    <name type="scientific">Acanthamoeba polyphaga</name>
    <name type="common">Amoeba</name>
    <dbReference type="NCBI Taxonomy" id="5757"/>
</organismHost>